<proteinExistence type="inferred from homology"/>
<accession>A3MZT2</accession>
<comment type="similarity">
    <text evidence="1">Belongs to the universal ribosomal protein uS2 family.</text>
</comment>
<dbReference type="EMBL" id="CP000569">
    <property type="protein sequence ID" value="ABN73668.1"/>
    <property type="molecule type" value="Genomic_DNA"/>
</dbReference>
<dbReference type="RefSeq" id="WP_011848430.1">
    <property type="nucleotide sequence ID" value="NC_009053.1"/>
</dbReference>
<dbReference type="SMR" id="A3MZT2"/>
<dbReference type="STRING" id="416269.APL_0566"/>
<dbReference type="EnsemblBacteria" id="ABN73668">
    <property type="protein sequence ID" value="ABN73668"/>
    <property type="gene ID" value="APL_0566"/>
</dbReference>
<dbReference type="KEGG" id="apl:APL_0566"/>
<dbReference type="PATRIC" id="fig|416269.6.peg.597"/>
<dbReference type="eggNOG" id="COG0052">
    <property type="taxonomic scope" value="Bacteria"/>
</dbReference>
<dbReference type="HOGENOM" id="CLU_040318_1_2_6"/>
<dbReference type="Proteomes" id="UP000001432">
    <property type="component" value="Chromosome"/>
</dbReference>
<dbReference type="GO" id="GO:0022627">
    <property type="term" value="C:cytosolic small ribosomal subunit"/>
    <property type="evidence" value="ECO:0007669"/>
    <property type="project" value="TreeGrafter"/>
</dbReference>
<dbReference type="GO" id="GO:0003735">
    <property type="term" value="F:structural constituent of ribosome"/>
    <property type="evidence" value="ECO:0007669"/>
    <property type="project" value="InterPro"/>
</dbReference>
<dbReference type="GO" id="GO:0006412">
    <property type="term" value="P:translation"/>
    <property type="evidence" value="ECO:0007669"/>
    <property type="project" value="UniProtKB-UniRule"/>
</dbReference>
<dbReference type="CDD" id="cd01425">
    <property type="entry name" value="RPS2"/>
    <property type="match status" value="1"/>
</dbReference>
<dbReference type="FunFam" id="1.10.287.610:FF:000001">
    <property type="entry name" value="30S ribosomal protein S2"/>
    <property type="match status" value="1"/>
</dbReference>
<dbReference type="Gene3D" id="3.40.50.10490">
    <property type="entry name" value="Glucose-6-phosphate isomerase like protein, domain 1"/>
    <property type="match status" value="1"/>
</dbReference>
<dbReference type="Gene3D" id="1.10.287.610">
    <property type="entry name" value="Helix hairpin bin"/>
    <property type="match status" value="1"/>
</dbReference>
<dbReference type="HAMAP" id="MF_00291_B">
    <property type="entry name" value="Ribosomal_uS2_B"/>
    <property type="match status" value="1"/>
</dbReference>
<dbReference type="InterPro" id="IPR001865">
    <property type="entry name" value="Ribosomal_uS2"/>
</dbReference>
<dbReference type="InterPro" id="IPR005706">
    <property type="entry name" value="Ribosomal_uS2_bac/mit/plastid"/>
</dbReference>
<dbReference type="InterPro" id="IPR018130">
    <property type="entry name" value="Ribosomal_uS2_CS"/>
</dbReference>
<dbReference type="InterPro" id="IPR023591">
    <property type="entry name" value="Ribosomal_uS2_flav_dom_sf"/>
</dbReference>
<dbReference type="NCBIfam" id="TIGR01011">
    <property type="entry name" value="rpsB_bact"/>
    <property type="match status" value="1"/>
</dbReference>
<dbReference type="PANTHER" id="PTHR12534">
    <property type="entry name" value="30S RIBOSOMAL PROTEIN S2 PROKARYOTIC AND ORGANELLAR"/>
    <property type="match status" value="1"/>
</dbReference>
<dbReference type="PANTHER" id="PTHR12534:SF0">
    <property type="entry name" value="SMALL RIBOSOMAL SUBUNIT PROTEIN US2M"/>
    <property type="match status" value="1"/>
</dbReference>
<dbReference type="Pfam" id="PF00318">
    <property type="entry name" value="Ribosomal_S2"/>
    <property type="match status" value="1"/>
</dbReference>
<dbReference type="PRINTS" id="PR00395">
    <property type="entry name" value="RIBOSOMALS2"/>
</dbReference>
<dbReference type="SUPFAM" id="SSF52313">
    <property type="entry name" value="Ribosomal protein S2"/>
    <property type="match status" value="1"/>
</dbReference>
<dbReference type="PROSITE" id="PS00963">
    <property type="entry name" value="RIBOSOMAL_S2_2"/>
    <property type="match status" value="1"/>
</dbReference>
<reference key="1">
    <citation type="journal article" date="2008" name="J. Bacteriol.">
        <title>The complete genome sequence of Actinobacillus pleuropneumoniae L20 (serotype 5b).</title>
        <authorList>
            <person name="Foote S.J."/>
            <person name="Bosse J.T."/>
            <person name="Bouevitch A.B."/>
            <person name="Langford P.R."/>
            <person name="Young N.M."/>
            <person name="Nash J.H.E."/>
        </authorList>
    </citation>
    <scope>NUCLEOTIDE SEQUENCE [LARGE SCALE GENOMIC DNA]</scope>
    <source>
        <strain>L20</strain>
    </source>
</reference>
<sequence>MAQVSMRDMLNAGVHYGHQTRYWNPKMKPFIFGARNGVHVINLEKTLPLFNEALAELTRISSNNGKILFVGTKRAASEAVKAAAVDCQQFYVNHRWLGGMLTNWKTVRQSIKRLKDLETQTQDGTFDKITKKEALMRTRELETLELSLGGIKDMAGLPDAIFVIGADHEHIAIKEANNLGIPVFAIVDTNSTPDGVNYIIPGNDDATRAIQLYLDAAAAAVKEGRGSNVEAELEATAE</sequence>
<evidence type="ECO:0000255" key="1">
    <source>
        <dbReference type="HAMAP-Rule" id="MF_00291"/>
    </source>
</evidence>
<evidence type="ECO:0000305" key="2"/>
<name>RS2_ACTP2</name>
<gene>
    <name evidence="1" type="primary">rpsB</name>
    <name type="ordered locus">APL_0566</name>
</gene>
<feature type="chain" id="PRO_1000003880" description="Small ribosomal subunit protein uS2">
    <location>
        <begin position="1"/>
        <end position="238"/>
    </location>
</feature>
<organism>
    <name type="scientific">Actinobacillus pleuropneumoniae serotype 5b (strain L20)</name>
    <dbReference type="NCBI Taxonomy" id="416269"/>
    <lineage>
        <taxon>Bacteria</taxon>
        <taxon>Pseudomonadati</taxon>
        <taxon>Pseudomonadota</taxon>
        <taxon>Gammaproteobacteria</taxon>
        <taxon>Pasteurellales</taxon>
        <taxon>Pasteurellaceae</taxon>
        <taxon>Actinobacillus</taxon>
    </lineage>
</organism>
<keyword id="KW-1185">Reference proteome</keyword>
<keyword id="KW-0687">Ribonucleoprotein</keyword>
<keyword id="KW-0689">Ribosomal protein</keyword>
<protein>
    <recommendedName>
        <fullName evidence="1">Small ribosomal subunit protein uS2</fullName>
    </recommendedName>
    <alternativeName>
        <fullName evidence="2">30S ribosomal protein S2</fullName>
    </alternativeName>
</protein>